<dbReference type="EC" id="5.1.1.3" evidence="1"/>
<dbReference type="EMBL" id="AP009324">
    <property type="protein sequence ID" value="BAF78024.1"/>
    <property type="molecule type" value="Genomic_DNA"/>
</dbReference>
<dbReference type="SMR" id="A7X179"/>
<dbReference type="KEGG" id="saw:SAHV_1141"/>
<dbReference type="HOGENOM" id="CLU_052344_0_2_9"/>
<dbReference type="UniPathway" id="UPA00219"/>
<dbReference type="GO" id="GO:0008881">
    <property type="term" value="F:glutamate racemase activity"/>
    <property type="evidence" value="ECO:0007669"/>
    <property type="project" value="UniProtKB-UniRule"/>
</dbReference>
<dbReference type="GO" id="GO:0071555">
    <property type="term" value="P:cell wall organization"/>
    <property type="evidence" value="ECO:0007669"/>
    <property type="project" value="UniProtKB-KW"/>
</dbReference>
<dbReference type="GO" id="GO:0009252">
    <property type="term" value="P:peptidoglycan biosynthetic process"/>
    <property type="evidence" value="ECO:0007669"/>
    <property type="project" value="UniProtKB-UniRule"/>
</dbReference>
<dbReference type="GO" id="GO:0008360">
    <property type="term" value="P:regulation of cell shape"/>
    <property type="evidence" value="ECO:0007669"/>
    <property type="project" value="UniProtKB-KW"/>
</dbReference>
<dbReference type="FunFam" id="3.40.50.1860:FF:000002">
    <property type="entry name" value="Glutamate racemase"/>
    <property type="match status" value="1"/>
</dbReference>
<dbReference type="Gene3D" id="3.40.50.1860">
    <property type="match status" value="2"/>
</dbReference>
<dbReference type="HAMAP" id="MF_00258">
    <property type="entry name" value="Glu_racemase"/>
    <property type="match status" value="1"/>
</dbReference>
<dbReference type="InterPro" id="IPR015942">
    <property type="entry name" value="Asp/Glu/hydantoin_racemase"/>
</dbReference>
<dbReference type="InterPro" id="IPR001920">
    <property type="entry name" value="Asp/Glu_race"/>
</dbReference>
<dbReference type="InterPro" id="IPR018187">
    <property type="entry name" value="Asp/Glu_racemase_AS_1"/>
</dbReference>
<dbReference type="InterPro" id="IPR033134">
    <property type="entry name" value="Asp/Glu_racemase_AS_2"/>
</dbReference>
<dbReference type="InterPro" id="IPR004391">
    <property type="entry name" value="Glu_race"/>
</dbReference>
<dbReference type="NCBIfam" id="TIGR00067">
    <property type="entry name" value="glut_race"/>
    <property type="match status" value="1"/>
</dbReference>
<dbReference type="NCBIfam" id="NF002035">
    <property type="entry name" value="PRK00865.1-3"/>
    <property type="match status" value="1"/>
</dbReference>
<dbReference type="PANTHER" id="PTHR21198">
    <property type="entry name" value="GLUTAMATE RACEMASE"/>
    <property type="match status" value="1"/>
</dbReference>
<dbReference type="PANTHER" id="PTHR21198:SF2">
    <property type="entry name" value="GLUTAMATE RACEMASE"/>
    <property type="match status" value="1"/>
</dbReference>
<dbReference type="Pfam" id="PF01177">
    <property type="entry name" value="Asp_Glu_race"/>
    <property type="match status" value="1"/>
</dbReference>
<dbReference type="SUPFAM" id="SSF53681">
    <property type="entry name" value="Aspartate/glutamate racemase"/>
    <property type="match status" value="2"/>
</dbReference>
<dbReference type="PROSITE" id="PS00923">
    <property type="entry name" value="ASP_GLU_RACEMASE_1"/>
    <property type="match status" value="1"/>
</dbReference>
<dbReference type="PROSITE" id="PS00924">
    <property type="entry name" value="ASP_GLU_RACEMASE_2"/>
    <property type="match status" value="1"/>
</dbReference>
<keyword id="KW-0133">Cell shape</keyword>
<keyword id="KW-0961">Cell wall biogenesis/degradation</keyword>
<keyword id="KW-0413">Isomerase</keyword>
<keyword id="KW-0573">Peptidoglycan synthesis</keyword>
<accession>A7X179</accession>
<gene>
    <name evidence="1" type="primary">murI</name>
    <name type="ordered locus">SAHV_1141</name>
</gene>
<organism>
    <name type="scientific">Staphylococcus aureus (strain Mu3 / ATCC 700698)</name>
    <dbReference type="NCBI Taxonomy" id="418127"/>
    <lineage>
        <taxon>Bacteria</taxon>
        <taxon>Bacillati</taxon>
        <taxon>Bacillota</taxon>
        <taxon>Bacilli</taxon>
        <taxon>Bacillales</taxon>
        <taxon>Staphylococcaceae</taxon>
        <taxon>Staphylococcus</taxon>
    </lineage>
</organism>
<sequence>MNKPIGVIDSGVGGLTVAKEIMRQLPNETIYYLGDIGRCPYGPRPGEQVKQYTVEIARKLMEFDIKMLVIACNTATAVALEYLQKTLSIPVIGVIEPGARTAIMTTRNQNVLVLGTEGTIKSEAYRTHIKRINPHVEVHGVACPGFVPLVEQMRYSDPTITSIVIHQTLKRWRNSESDTVILGCTHYPLLYKPIYDYFGGKKTVISSGLETAREVSALLTFSNEHASYTEHPDHRFFATGDPTHITNIIKEWLNLSVNVERISVND</sequence>
<protein>
    <recommendedName>
        <fullName evidence="1">Glutamate racemase</fullName>
        <ecNumber evidence="1">5.1.1.3</ecNumber>
    </recommendedName>
</protein>
<evidence type="ECO:0000255" key="1">
    <source>
        <dbReference type="HAMAP-Rule" id="MF_00258"/>
    </source>
</evidence>
<proteinExistence type="inferred from homology"/>
<feature type="chain" id="PRO_1000047614" description="Glutamate racemase">
    <location>
        <begin position="1"/>
        <end position="266"/>
    </location>
</feature>
<feature type="active site" description="Proton donor/acceptor" evidence="1">
    <location>
        <position position="72"/>
    </location>
</feature>
<feature type="active site" description="Proton donor/acceptor" evidence="1">
    <location>
        <position position="184"/>
    </location>
</feature>
<feature type="binding site" evidence="1">
    <location>
        <begin position="9"/>
        <end position="10"/>
    </location>
    <ligand>
        <name>substrate</name>
    </ligand>
</feature>
<feature type="binding site" evidence="1">
    <location>
        <begin position="41"/>
        <end position="42"/>
    </location>
    <ligand>
        <name>substrate</name>
    </ligand>
</feature>
<feature type="binding site" evidence="1">
    <location>
        <begin position="73"/>
        <end position="74"/>
    </location>
    <ligand>
        <name>substrate</name>
    </ligand>
</feature>
<feature type="binding site" evidence="1">
    <location>
        <begin position="185"/>
        <end position="186"/>
    </location>
    <ligand>
        <name>substrate</name>
    </ligand>
</feature>
<reference key="1">
    <citation type="journal article" date="2008" name="Antimicrob. Agents Chemother.">
        <title>Mutated response regulator graR is responsible for phenotypic conversion of Staphylococcus aureus from heterogeneous vancomycin-intermediate resistance to vancomycin-intermediate resistance.</title>
        <authorList>
            <person name="Neoh H.-M."/>
            <person name="Cui L."/>
            <person name="Yuzawa H."/>
            <person name="Takeuchi F."/>
            <person name="Matsuo M."/>
            <person name="Hiramatsu K."/>
        </authorList>
    </citation>
    <scope>NUCLEOTIDE SEQUENCE [LARGE SCALE GENOMIC DNA]</scope>
    <source>
        <strain>Mu3 / ATCC 700698</strain>
    </source>
</reference>
<comment type="function">
    <text evidence="1">Provides the (R)-glutamate required for cell wall biosynthesis.</text>
</comment>
<comment type="catalytic activity">
    <reaction evidence="1">
        <text>L-glutamate = D-glutamate</text>
        <dbReference type="Rhea" id="RHEA:12813"/>
        <dbReference type="ChEBI" id="CHEBI:29985"/>
        <dbReference type="ChEBI" id="CHEBI:29986"/>
        <dbReference type="EC" id="5.1.1.3"/>
    </reaction>
</comment>
<comment type="pathway">
    <text evidence="1">Cell wall biogenesis; peptidoglycan biosynthesis.</text>
</comment>
<comment type="similarity">
    <text evidence="1">Belongs to the aspartate/glutamate racemases family.</text>
</comment>
<name>MURI_STAA1</name>